<proteinExistence type="evidence at protein level"/>
<evidence type="ECO:0000256" key="1">
    <source>
        <dbReference type="SAM" id="MobiDB-lite"/>
    </source>
</evidence>
<evidence type="ECO:0000305" key="2"/>
<comment type="function">
    <text>cAMP-responsive transcriptional activator regulating late gene expression. Essential component of the developmental switch between early and late development. Binds to a number of CA/GT-rich gene regulatory elements.</text>
</comment>
<comment type="subcellular location">
    <subcellularLocation>
        <location evidence="2">Nucleus</location>
    </subcellularLocation>
</comment>
<gene>
    <name type="primary">gbfA</name>
    <name type="ORF">DDB_G0288755</name>
</gene>
<feature type="chain" id="PRO_0000087434" description="G-box-binding factor">
    <location>
        <begin position="1"/>
        <end position="708"/>
    </location>
</feature>
<feature type="repeat" description="1">
    <location>
        <begin position="339"/>
        <end position="368"/>
    </location>
</feature>
<feature type="repeat" description="2">
    <location>
        <begin position="481"/>
        <end position="510"/>
    </location>
</feature>
<feature type="region of interest" description="Disordered" evidence="1">
    <location>
        <begin position="1"/>
        <end position="29"/>
    </location>
</feature>
<feature type="region of interest" description="Disordered" evidence="1">
    <location>
        <begin position="123"/>
        <end position="339"/>
    </location>
</feature>
<feature type="region of interest" description="Disordered" evidence="1">
    <location>
        <begin position="511"/>
        <end position="604"/>
    </location>
</feature>
<feature type="compositionally biased region" description="Low complexity" evidence="1">
    <location>
        <begin position="11"/>
        <end position="21"/>
    </location>
</feature>
<feature type="compositionally biased region" description="Low complexity" evidence="1">
    <location>
        <begin position="123"/>
        <end position="219"/>
    </location>
</feature>
<feature type="compositionally biased region" description="Low complexity" evidence="1">
    <location>
        <begin position="227"/>
        <end position="316"/>
    </location>
</feature>
<feature type="compositionally biased region" description="Basic and acidic residues" evidence="1">
    <location>
        <begin position="324"/>
        <end position="333"/>
    </location>
</feature>
<feature type="compositionally biased region" description="Low complexity" evidence="1">
    <location>
        <begin position="516"/>
        <end position="590"/>
    </location>
</feature>
<feature type="compositionally biased region" description="Polar residues" evidence="1">
    <location>
        <begin position="591"/>
        <end position="600"/>
    </location>
</feature>
<feature type="sequence conflict" description="In Ref. 1; AAA21021." evidence="2" ref="1">
    <original>Y</original>
    <variation>C</variation>
    <location>
        <position position="597"/>
    </location>
</feature>
<feature type="sequence conflict" description="In Ref. 1; AAA21021." evidence="2" ref="1">
    <original>L</original>
    <variation>Q</variation>
    <location>
        <position position="613"/>
    </location>
</feature>
<dbReference type="EMBL" id="L29075">
    <property type="protein sequence ID" value="AAA21021.1"/>
    <property type="molecule type" value="mRNA"/>
</dbReference>
<dbReference type="EMBL" id="AAFI02000123">
    <property type="protein sequence ID" value="EAL63064.1"/>
    <property type="molecule type" value="Genomic_DNA"/>
</dbReference>
<dbReference type="PIR" id="A53185">
    <property type="entry name" value="A53185"/>
</dbReference>
<dbReference type="RefSeq" id="XP_636567.1">
    <property type="nucleotide sequence ID" value="XM_631475.1"/>
</dbReference>
<dbReference type="FunCoup" id="P36417">
    <property type="interactions" value="658"/>
</dbReference>
<dbReference type="STRING" id="44689.P36417"/>
<dbReference type="GlyGen" id="P36417">
    <property type="glycosylation" value="1 site"/>
</dbReference>
<dbReference type="PaxDb" id="44689-DDB0191361"/>
<dbReference type="EnsemblProtists" id="EAL63064">
    <property type="protein sequence ID" value="EAL63064"/>
    <property type="gene ID" value="DDB_G0288755"/>
</dbReference>
<dbReference type="GeneID" id="8626787"/>
<dbReference type="KEGG" id="ddi:DDB_G0288755"/>
<dbReference type="dictyBase" id="DDB_G0288755">
    <property type="gene designation" value="gbfA"/>
</dbReference>
<dbReference type="VEuPathDB" id="AmoebaDB:DDB_G0288755"/>
<dbReference type="eggNOG" id="ENOG502RSTH">
    <property type="taxonomic scope" value="Eukaryota"/>
</dbReference>
<dbReference type="HOGENOM" id="CLU_390010_0_0_1"/>
<dbReference type="InParanoid" id="P36417"/>
<dbReference type="OMA" id="ASWRHDK"/>
<dbReference type="PRO" id="PR:P36417"/>
<dbReference type="Proteomes" id="UP000002195">
    <property type="component" value="Chromosome 5"/>
</dbReference>
<dbReference type="GO" id="GO:0005829">
    <property type="term" value="C:cytosol"/>
    <property type="evidence" value="ECO:0000314"/>
    <property type="project" value="dictyBase"/>
</dbReference>
<dbReference type="GO" id="GO:0005634">
    <property type="term" value="C:nucleus"/>
    <property type="evidence" value="ECO:0000314"/>
    <property type="project" value="dictyBase"/>
</dbReference>
<dbReference type="GO" id="GO:0003677">
    <property type="term" value="F:DNA binding"/>
    <property type="evidence" value="ECO:0000314"/>
    <property type="project" value="dictyBase"/>
</dbReference>
<dbReference type="GO" id="GO:0003700">
    <property type="term" value="F:DNA-binding transcription factor activity"/>
    <property type="evidence" value="ECO:0000315"/>
    <property type="project" value="dictyBase"/>
</dbReference>
<dbReference type="GO" id="GO:0043565">
    <property type="term" value="F:sequence-specific DNA binding"/>
    <property type="evidence" value="ECO:0000314"/>
    <property type="project" value="dictyBase"/>
</dbReference>
<dbReference type="GO" id="GO:0140582">
    <property type="term" value="P:adenylate cyclase-activating G protein-coupled cAMP receptor signaling pathway"/>
    <property type="evidence" value="ECO:0000315"/>
    <property type="project" value="dictyBase"/>
</dbReference>
<dbReference type="GO" id="GO:0048102">
    <property type="term" value="P:autophagic cell death"/>
    <property type="evidence" value="ECO:0000315"/>
    <property type="project" value="dictyBase"/>
</dbReference>
<dbReference type="GO" id="GO:0110013">
    <property type="term" value="P:positive regulation of aggregation involved in sorocarp development"/>
    <property type="evidence" value="ECO:0000315"/>
    <property type="project" value="dictyBase"/>
</dbReference>
<dbReference type="GO" id="GO:0006357">
    <property type="term" value="P:regulation of transcription by RNA polymerase II"/>
    <property type="evidence" value="ECO:0000315"/>
    <property type="project" value="dictyBase"/>
</dbReference>
<dbReference type="GO" id="GO:1902168">
    <property type="term" value="P:response to catechin"/>
    <property type="evidence" value="ECO:0000314"/>
    <property type="project" value="dictyBase"/>
</dbReference>
<dbReference type="GO" id="GO:0030587">
    <property type="term" value="P:sorocarp development"/>
    <property type="evidence" value="ECO:0000270"/>
    <property type="project" value="dictyBase"/>
</dbReference>
<reference key="1">
    <citation type="journal article" date="1994" name="Genes Dev.">
        <title>Cloning and characterization of the G-box binding factor, an essential component of the developmental switch between early and late development in Dictyostelium.</title>
        <authorList>
            <person name="Schnitzler G.R."/>
            <person name="Fischer W.H."/>
            <person name="Firtel R.A."/>
        </authorList>
    </citation>
    <scope>NUCLEOTIDE SEQUENCE [MRNA]</scope>
    <scope>PARTIAL PROTEIN SEQUENCE</scope>
    <source>
        <strain>AX3</strain>
    </source>
</reference>
<reference key="2">
    <citation type="journal article" date="2005" name="Nature">
        <title>The genome of the social amoeba Dictyostelium discoideum.</title>
        <authorList>
            <person name="Eichinger L."/>
            <person name="Pachebat J.A."/>
            <person name="Gloeckner G."/>
            <person name="Rajandream M.A."/>
            <person name="Sucgang R."/>
            <person name="Berriman M."/>
            <person name="Song J."/>
            <person name="Olsen R."/>
            <person name="Szafranski K."/>
            <person name="Xu Q."/>
            <person name="Tunggal B."/>
            <person name="Kummerfeld S."/>
            <person name="Madera M."/>
            <person name="Konfortov B.A."/>
            <person name="Rivero F."/>
            <person name="Bankier A.T."/>
            <person name="Lehmann R."/>
            <person name="Hamlin N."/>
            <person name="Davies R."/>
            <person name="Gaudet P."/>
            <person name="Fey P."/>
            <person name="Pilcher K."/>
            <person name="Chen G."/>
            <person name="Saunders D."/>
            <person name="Sodergren E.J."/>
            <person name="Davis P."/>
            <person name="Kerhornou A."/>
            <person name="Nie X."/>
            <person name="Hall N."/>
            <person name="Anjard C."/>
            <person name="Hemphill L."/>
            <person name="Bason N."/>
            <person name="Farbrother P."/>
            <person name="Desany B."/>
            <person name="Just E."/>
            <person name="Morio T."/>
            <person name="Rost R."/>
            <person name="Churcher C.M."/>
            <person name="Cooper J."/>
            <person name="Haydock S."/>
            <person name="van Driessche N."/>
            <person name="Cronin A."/>
            <person name="Goodhead I."/>
            <person name="Muzny D.M."/>
            <person name="Mourier T."/>
            <person name="Pain A."/>
            <person name="Lu M."/>
            <person name="Harper D."/>
            <person name="Lindsay R."/>
            <person name="Hauser H."/>
            <person name="James K.D."/>
            <person name="Quiles M."/>
            <person name="Madan Babu M."/>
            <person name="Saito T."/>
            <person name="Buchrieser C."/>
            <person name="Wardroper A."/>
            <person name="Felder M."/>
            <person name="Thangavelu M."/>
            <person name="Johnson D."/>
            <person name="Knights A."/>
            <person name="Loulseged H."/>
            <person name="Mungall K.L."/>
            <person name="Oliver K."/>
            <person name="Price C."/>
            <person name="Quail M.A."/>
            <person name="Urushihara H."/>
            <person name="Hernandez J."/>
            <person name="Rabbinowitsch E."/>
            <person name="Steffen D."/>
            <person name="Sanders M."/>
            <person name="Ma J."/>
            <person name="Kohara Y."/>
            <person name="Sharp S."/>
            <person name="Simmonds M.N."/>
            <person name="Spiegler S."/>
            <person name="Tivey A."/>
            <person name="Sugano S."/>
            <person name="White B."/>
            <person name="Walker D."/>
            <person name="Woodward J.R."/>
            <person name="Winckler T."/>
            <person name="Tanaka Y."/>
            <person name="Shaulsky G."/>
            <person name="Schleicher M."/>
            <person name="Weinstock G.M."/>
            <person name="Rosenthal A."/>
            <person name="Cox E.C."/>
            <person name="Chisholm R.L."/>
            <person name="Gibbs R.A."/>
            <person name="Loomis W.F."/>
            <person name="Platzer M."/>
            <person name="Kay R.R."/>
            <person name="Williams J.G."/>
            <person name="Dear P.H."/>
            <person name="Noegel A.A."/>
            <person name="Barrell B.G."/>
            <person name="Kuspa A."/>
        </authorList>
    </citation>
    <scope>NUCLEOTIDE SEQUENCE [LARGE SCALE GENOMIC DNA]</scope>
    <source>
        <strain>AX4</strain>
    </source>
</reference>
<sequence length="708" mass="79312">MLSTHHHQGNSSSSSSSSSPSQTIGGSDLSNISALPLPLPSIFTTAQNQMNPPILFPPTSSLLGGSSNTPSFLLPPSSIMSSNVFPSHDGQYPDMPNMVDQYQIHPNQNPHYNYQYQLMFMQQQAQQNQPPQQNQQQQHHQQQQQQPQHHQQMQQQQHHQQMQQQQQHHQQMQQQQHHQQMQHHQLQQHQHQHQQQQQQQQHQQQHHQQQQQQQQQHHQQQQHHQHSQPQQQHQHNQQQQHQHNQQQHQQQQNQIQMVPQQPQSLSNSGNNNNNNNNNNNSNNNNNNNNNNNSHQLNNLTLSQNNTSGSNTPSPSTKGKRKHHETSNSEKKDSSGQTIPKCTRCNEAASWKHDKRRWWCKECKKAFTPGITKMQQVPQQAQLQPLQNHNQIIPQLWDSQQNNSSQNTPPTQPQNNMNQINHQLLQQQHQQAQLQAHLNLTASNQQVPPQLQQQINGGLPNNNNSLITQNTLNSLSTSVSCPPCPLCRGISSWKHDKKRYFCKECKKPFTPVGAGLSPSSSPSSPKKKSNITPITTSSTSSSSSTPSIINNNNNNNANSSKNNTPKKQLSPPPSVLQSPSSSSISQSPLQLNYQTPTYSPNPSLPSIGGNLNSLANSIKPDGGILISGLSPPKSSSSLNNLNSFSNTGALLSSNGINLANLGNPLSQLNKKQKKRSDKDINDGGVQVLVSCVDTNVNNCSSIIPDGDSW</sequence>
<keyword id="KW-0010">Activator</keyword>
<keyword id="KW-0903">Direct protein sequencing</keyword>
<keyword id="KW-0238">DNA-binding</keyword>
<keyword id="KW-0539">Nucleus</keyword>
<keyword id="KW-1185">Reference proteome</keyword>
<keyword id="KW-0677">Repeat</keyword>
<keyword id="KW-0804">Transcription</keyword>
<keyword id="KW-0805">Transcription regulation</keyword>
<protein>
    <recommendedName>
        <fullName>G-box-binding factor</fullName>
        <shortName>GBF</shortName>
    </recommendedName>
</protein>
<organism>
    <name type="scientific">Dictyostelium discoideum</name>
    <name type="common">Social amoeba</name>
    <dbReference type="NCBI Taxonomy" id="44689"/>
    <lineage>
        <taxon>Eukaryota</taxon>
        <taxon>Amoebozoa</taxon>
        <taxon>Evosea</taxon>
        <taxon>Eumycetozoa</taxon>
        <taxon>Dictyostelia</taxon>
        <taxon>Dictyosteliales</taxon>
        <taxon>Dictyosteliaceae</taxon>
        <taxon>Dictyostelium</taxon>
    </lineage>
</organism>
<name>GBF_DICDI</name>
<accession>P36417</accession>
<accession>Q54IH5</accession>